<dbReference type="EC" id="3.4.11.1" evidence="1"/>
<dbReference type="EC" id="3.4.11.10" evidence="1"/>
<dbReference type="EMBL" id="AP010918">
    <property type="protein sequence ID" value="BAH26507.1"/>
    <property type="molecule type" value="Genomic_DNA"/>
</dbReference>
<dbReference type="RefSeq" id="WP_003411444.1">
    <property type="nucleotide sequence ID" value="NZ_CP014566.1"/>
</dbReference>
<dbReference type="SMR" id="C1AQC8"/>
<dbReference type="KEGG" id="mbt:JTY_2223"/>
<dbReference type="HOGENOM" id="CLU_013734_2_2_11"/>
<dbReference type="GO" id="GO:0005737">
    <property type="term" value="C:cytoplasm"/>
    <property type="evidence" value="ECO:0007669"/>
    <property type="project" value="UniProtKB-SubCell"/>
</dbReference>
<dbReference type="GO" id="GO:0030145">
    <property type="term" value="F:manganese ion binding"/>
    <property type="evidence" value="ECO:0007669"/>
    <property type="project" value="UniProtKB-UniRule"/>
</dbReference>
<dbReference type="GO" id="GO:0070006">
    <property type="term" value="F:metalloaminopeptidase activity"/>
    <property type="evidence" value="ECO:0007669"/>
    <property type="project" value="InterPro"/>
</dbReference>
<dbReference type="GO" id="GO:0006508">
    <property type="term" value="P:proteolysis"/>
    <property type="evidence" value="ECO:0007669"/>
    <property type="project" value="UniProtKB-KW"/>
</dbReference>
<dbReference type="CDD" id="cd00433">
    <property type="entry name" value="Peptidase_M17"/>
    <property type="match status" value="1"/>
</dbReference>
<dbReference type="FunFam" id="3.40.630.10:FF:000087">
    <property type="entry name" value="Probable cytosol aminopeptidase"/>
    <property type="match status" value="1"/>
</dbReference>
<dbReference type="Gene3D" id="3.40.220.10">
    <property type="entry name" value="Leucine Aminopeptidase, subunit E, domain 1"/>
    <property type="match status" value="1"/>
</dbReference>
<dbReference type="Gene3D" id="3.40.630.10">
    <property type="entry name" value="Zn peptidases"/>
    <property type="match status" value="1"/>
</dbReference>
<dbReference type="HAMAP" id="MF_00181">
    <property type="entry name" value="Cytosol_peptidase_M17"/>
    <property type="match status" value="1"/>
</dbReference>
<dbReference type="InterPro" id="IPR011356">
    <property type="entry name" value="Leucine_aapep/pepB"/>
</dbReference>
<dbReference type="InterPro" id="IPR043472">
    <property type="entry name" value="Macro_dom-like"/>
</dbReference>
<dbReference type="InterPro" id="IPR000819">
    <property type="entry name" value="Peptidase_M17_C"/>
</dbReference>
<dbReference type="InterPro" id="IPR023042">
    <property type="entry name" value="Peptidase_M17_leu_NH2_pept"/>
</dbReference>
<dbReference type="InterPro" id="IPR008283">
    <property type="entry name" value="Peptidase_M17_N"/>
</dbReference>
<dbReference type="NCBIfam" id="NF002073">
    <property type="entry name" value="PRK00913.1-2"/>
    <property type="match status" value="1"/>
</dbReference>
<dbReference type="PANTHER" id="PTHR11963:SF23">
    <property type="entry name" value="CYTOSOL AMINOPEPTIDASE"/>
    <property type="match status" value="1"/>
</dbReference>
<dbReference type="PANTHER" id="PTHR11963">
    <property type="entry name" value="LEUCINE AMINOPEPTIDASE-RELATED"/>
    <property type="match status" value="1"/>
</dbReference>
<dbReference type="Pfam" id="PF00883">
    <property type="entry name" value="Peptidase_M17"/>
    <property type="match status" value="1"/>
</dbReference>
<dbReference type="Pfam" id="PF02789">
    <property type="entry name" value="Peptidase_M17_N"/>
    <property type="match status" value="1"/>
</dbReference>
<dbReference type="PRINTS" id="PR00481">
    <property type="entry name" value="LAMNOPPTDASE"/>
</dbReference>
<dbReference type="SUPFAM" id="SSF52949">
    <property type="entry name" value="Macro domain-like"/>
    <property type="match status" value="1"/>
</dbReference>
<dbReference type="SUPFAM" id="SSF53187">
    <property type="entry name" value="Zn-dependent exopeptidases"/>
    <property type="match status" value="1"/>
</dbReference>
<dbReference type="PROSITE" id="PS00631">
    <property type="entry name" value="CYTOSOL_AP"/>
    <property type="match status" value="1"/>
</dbReference>
<proteinExistence type="inferred from homology"/>
<gene>
    <name evidence="1" type="primary">pepA</name>
    <name type="ordered locus">JTY_2223</name>
</gene>
<feature type="chain" id="PRO_1000192717" description="Probable cytosol aminopeptidase">
    <location>
        <begin position="1"/>
        <end position="515"/>
    </location>
</feature>
<feature type="active site" evidence="1">
    <location>
        <position position="291"/>
    </location>
</feature>
<feature type="active site" evidence="1">
    <location>
        <position position="365"/>
    </location>
</feature>
<feature type="binding site" evidence="1">
    <location>
        <position position="279"/>
    </location>
    <ligand>
        <name>Mn(2+)</name>
        <dbReference type="ChEBI" id="CHEBI:29035"/>
        <label>2</label>
    </ligand>
</feature>
<feature type="binding site" evidence="1">
    <location>
        <position position="284"/>
    </location>
    <ligand>
        <name>Mn(2+)</name>
        <dbReference type="ChEBI" id="CHEBI:29035"/>
        <label>1</label>
    </ligand>
</feature>
<feature type="binding site" evidence="1">
    <location>
        <position position="284"/>
    </location>
    <ligand>
        <name>Mn(2+)</name>
        <dbReference type="ChEBI" id="CHEBI:29035"/>
        <label>2</label>
    </ligand>
</feature>
<feature type="binding site" evidence="1">
    <location>
        <position position="302"/>
    </location>
    <ligand>
        <name>Mn(2+)</name>
        <dbReference type="ChEBI" id="CHEBI:29035"/>
        <label>2</label>
    </ligand>
</feature>
<feature type="binding site" evidence="1">
    <location>
        <position position="361"/>
    </location>
    <ligand>
        <name>Mn(2+)</name>
        <dbReference type="ChEBI" id="CHEBI:29035"/>
        <label>1</label>
    </ligand>
</feature>
<feature type="binding site" evidence="1">
    <location>
        <position position="363"/>
    </location>
    <ligand>
        <name>Mn(2+)</name>
        <dbReference type="ChEBI" id="CHEBI:29035"/>
        <label>1</label>
    </ligand>
</feature>
<feature type="binding site" evidence="1">
    <location>
        <position position="363"/>
    </location>
    <ligand>
        <name>Mn(2+)</name>
        <dbReference type="ChEBI" id="CHEBI:29035"/>
        <label>2</label>
    </ligand>
</feature>
<sequence length="515" mass="53447">MTTEPGYLSPSVAVATSMPKRGVGAAVLIVPVVSTGEEDRPGAVVASAEPFLRADTVAEIEAGLRALDATGASDQVHRLAVPSLPVGSVLTVGLGKPRREWPADTIRCAAGVAARALNSSEAVITTLAELPGDGICSATVEGLILGSYRFSAFRSDKTAPKDAGLRKITVLCCAKDAKKRALHGAAVATAVATARDLVNTPPSHLFPAELAKRAKTLSESVGLDVEVIDEKALKKAGYGGVIGVGQGSSRPPRLVRLIHRGSRLAKNPQKAKKVALVGKGITFDTGGISIKPAASMHHMTSDMGGAAAVIATVTLAARLRLPIDVIATVPMAENMPSATAQRPGDVLTQYGGTTVEVLNTDAEGRLILADAIVRACEDKPDYLIETSTLTGAQTVALGTRIPGVMGSDEFRDRVAAISQRVGENGWPMPLPDDLKDDLKSTVADLANVSGQRFAGMLVAGVFLREFVAESVDWAHIDVAGPAYNTGSAWGYTPKGATGVPTRTMFAVLEDIAKNG</sequence>
<reference key="1">
    <citation type="journal article" date="2009" name="Vaccine">
        <title>Whole genome sequence analysis of Mycobacterium bovis bacillus Calmette-Guerin (BCG) Tokyo 172: a comparative study of BCG vaccine substrains.</title>
        <authorList>
            <person name="Seki M."/>
            <person name="Honda I."/>
            <person name="Fujita I."/>
            <person name="Yano I."/>
            <person name="Yamamoto S."/>
            <person name="Koyama A."/>
        </authorList>
    </citation>
    <scope>NUCLEOTIDE SEQUENCE [LARGE SCALE GENOMIC DNA]</scope>
    <source>
        <strain>BCG / Tokyo 172 / ATCC 35737 / TMC 1019</strain>
    </source>
</reference>
<evidence type="ECO:0000255" key="1">
    <source>
        <dbReference type="HAMAP-Rule" id="MF_00181"/>
    </source>
</evidence>
<keyword id="KW-0031">Aminopeptidase</keyword>
<keyword id="KW-0963">Cytoplasm</keyword>
<keyword id="KW-0378">Hydrolase</keyword>
<keyword id="KW-0464">Manganese</keyword>
<keyword id="KW-0479">Metal-binding</keyword>
<keyword id="KW-0645">Protease</keyword>
<protein>
    <recommendedName>
        <fullName evidence="1">Probable cytosol aminopeptidase</fullName>
        <ecNumber evidence="1">3.4.11.1</ecNumber>
    </recommendedName>
    <alternativeName>
        <fullName evidence="1">Leucine aminopeptidase</fullName>
        <shortName evidence="1">LAP</shortName>
        <ecNumber evidence="1">3.4.11.10</ecNumber>
    </alternativeName>
    <alternativeName>
        <fullName evidence="1">Leucyl aminopeptidase</fullName>
    </alternativeName>
</protein>
<name>AMPA_MYCBT</name>
<accession>C1AQC8</accession>
<organism>
    <name type="scientific">Mycobacterium bovis (strain BCG / Tokyo 172 / ATCC 35737 / TMC 1019)</name>
    <dbReference type="NCBI Taxonomy" id="561275"/>
    <lineage>
        <taxon>Bacteria</taxon>
        <taxon>Bacillati</taxon>
        <taxon>Actinomycetota</taxon>
        <taxon>Actinomycetes</taxon>
        <taxon>Mycobacteriales</taxon>
        <taxon>Mycobacteriaceae</taxon>
        <taxon>Mycobacterium</taxon>
        <taxon>Mycobacterium tuberculosis complex</taxon>
    </lineage>
</organism>
<comment type="function">
    <text evidence="1">Presumably involved in the processing and regular turnover of intracellular proteins. Catalyzes the removal of unsubstituted N-terminal amino acids from various peptides.</text>
</comment>
<comment type="catalytic activity">
    <reaction evidence="1">
        <text>Release of an N-terminal amino acid, Xaa-|-Yaa-, in which Xaa is preferably Leu, but may be other amino acids including Pro although not Arg or Lys, and Yaa may be Pro. Amino acid amides and methyl esters are also readily hydrolyzed, but rates on arylamides are exceedingly low.</text>
        <dbReference type="EC" id="3.4.11.1"/>
    </reaction>
</comment>
<comment type="catalytic activity">
    <reaction evidence="1">
        <text>Release of an N-terminal amino acid, preferentially leucine, but not glutamic or aspartic acids.</text>
        <dbReference type="EC" id="3.4.11.10"/>
    </reaction>
</comment>
<comment type="cofactor">
    <cofactor evidence="1">
        <name>Mn(2+)</name>
        <dbReference type="ChEBI" id="CHEBI:29035"/>
    </cofactor>
    <text evidence="1">Binds 2 manganese ions per subunit.</text>
</comment>
<comment type="subcellular location">
    <subcellularLocation>
        <location evidence="1">Cytoplasm</location>
    </subcellularLocation>
</comment>
<comment type="similarity">
    <text evidence="1">Belongs to the peptidase M17 family.</text>
</comment>